<accession>Q9NAS9</accession>
<accession>Q7Q1D1</accession>
<gene>
    <name evidence="8" type="primary">CLIPB15</name>
    <name evidence="11" type="synonym">ser3</name>
    <name evidence="12" type="ORF">AGAP009844</name>
</gene>
<reference evidence="11" key="1">
    <citation type="journal article" date="2005" name="J. Biol. Chem.">
        <title>The roles of two clip domain serine proteases in innate immune responses of the malaria vector Anopheles gambiae.</title>
        <authorList>
            <person name="Volz J."/>
            <person name="Osta M.A."/>
            <person name="Kafatos F.C."/>
            <person name="Mueller H.M."/>
        </authorList>
    </citation>
    <scope>NUCLEOTIDE SEQUENCE [MRNA]</scope>
    <scope>FUNCTION</scope>
    <scope>SUBCELLULAR LOCATION</scope>
    <scope>TISSUE SPECIFICITY</scope>
    <scope>DEVELOPMENTAL STAGE</scope>
    <scope>INDUCTION</scope>
    <scope>GLYCOSYLATION</scope>
    <scope>PROTEOLYTIC CLEAVAGE</scope>
    <scope>DISRUPTION PHENOTYPE</scope>
</reference>
<reference evidence="13" key="2">
    <citation type="journal article" date="2002" name="Science">
        <title>The genome sequence of the malaria mosquito Anopheles gambiae.</title>
        <authorList>
            <person name="Holt R.A."/>
            <person name="Subramanian G.M."/>
            <person name="Halpern A."/>
            <person name="Sutton G.G."/>
            <person name="Charlab R."/>
            <person name="Nusskern D.R."/>
            <person name="Wincker P."/>
            <person name="Clark A.G."/>
            <person name="Ribeiro J.M.C."/>
            <person name="Wides R."/>
            <person name="Salzberg S.L."/>
            <person name="Loftus B.J."/>
            <person name="Yandell M.D."/>
            <person name="Majoros W.H."/>
            <person name="Rusch D.B."/>
            <person name="Lai Z."/>
            <person name="Kraft C.L."/>
            <person name="Abril J.F."/>
            <person name="Anthouard V."/>
            <person name="Arensburger P."/>
            <person name="Atkinson P.W."/>
            <person name="Baden H."/>
            <person name="de Berardinis V."/>
            <person name="Baldwin D."/>
            <person name="Benes V."/>
            <person name="Biedler J."/>
            <person name="Blass C."/>
            <person name="Bolanos R."/>
            <person name="Boscus D."/>
            <person name="Barnstead M."/>
            <person name="Cai S."/>
            <person name="Center A."/>
            <person name="Chaturverdi K."/>
            <person name="Christophides G.K."/>
            <person name="Chrystal M.A.M."/>
            <person name="Clamp M."/>
            <person name="Cravchik A."/>
            <person name="Curwen V."/>
            <person name="Dana A."/>
            <person name="Delcher A."/>
            <person name="Dew I."/>
            <person name="Evans C.A."/>
            <person name="Flanigan M."/>
            <person name="Grundschober-Freimoser A."/>
            <person name="Friedli L."/>
            <person name="Gu Z."/>
            <person name="Guan P."/>
            <person name="Guigo R."/>
            <person name="Hillenmeyer M.E."/>
            <person name="Hladun S.L."/>
            <person name="Hogan J.R."/>
            <person name="Hong Y.S."/>
            <person name="Hoover J."/>
            <person name="Jaillon O."/>
            <person name="Ke Z."/>
            <person name="Kodira C.D."/>
            <person name="Kokoza E."/>
            <person name="Koutsos A."/>
            <person name="Letunic I."/>
            <person name="Levitsky A.A."/>
            <person name="Liang Y."/>
            <person name="Lin J.-J."/>
            <person name="Lobo N.F."/>
            <person name="Lopez J.R."/>
            <person name="Malek J.A."/>
            <person name="McIntosh T.C."/>
            <person name="Meister S."/>
            <person name="Miller J.R."/>
            <person name="Mobarry C."/>
            <person name="Mongin E."/>
            <person name="Murphy S.D."/>
            <person name="O'Brochta D.A."/>
            <person name="Pfannkoch C."/>
            <person name="Qi R."/>
            <person name="Regier M.A."/>
            <person name="Remington K."/>
            <person name="Shao H."/>
            <person name="Sharakhova M.V."/>
            <person name="Sitter C.D."/>
            <person name="Shetty J."/>
            <person name="Smith T.J."/>
            <person name="Strong R."/>
            <person name="Sun J."/>
            <person name="Thomasova D."/>
            <person name="Ton L.Q."/>
            <person name="Topalis P."/>
            <person name="Tu Z.J."/>
            <person name="Unger M.F."/>
            <person name="Walenz B."/>
            <person name="Wang A.H."/>
            <person name="Wang J."/>
            <person name="Wang M."/>
            <person name="Wang X."/>
            <person name="Woodford K.J."/>
            <person name="Wortman J.R."/>
            <person name="Wu M."/>
            <person name="Yao A."/>
            <person name="Zdobnov E.M."/>
            <person name="Zhang H."/>
            <person name="Zhao Q."/>
            <person name="Zhao S."/>
            <person name="Zhu S.C."/>
            <person name="Zhimulev I."/>
            <person name="Coluzzi M."/>
            <person name="della Torre A."/>
            <person name="Roth C.W."/>
            <person name="Louis C."/>
            <person name="Kalush F."/>
            <person name="Mural R.J."/>
            <person name="Myers E.W."/>
            <person name="Adams M.D."/>
            <person name="Smith H.O."/>
            <person name="Broder S."/>
            <person name="Gardner M.J."/>
            <person name="Fraser C.M."/>
            <person name="Birney E."/>
            <person name="Bork P."/>
            <person name="Brey P.T."/>
            <person name="Venter J.C."/>
            <person name="Weissenbach J."/>
            <person name="Kafatos F.C."/>
            <person name="Collins F.H."/>
            <person name="Hoffman S.L."/>
        </authorList>
    </citation>
    <scope>NUCLEOTIDE SEQUENCE [LARGE SCALE GENOMIC DNA]</scope>
    <source>
        <strain evidence="13">PEST</strain>
    </source>
</reference>
<comment type="function">
    <text evidence="1 7">Serine protease (By similarity). Plays a role in innate immunity against infections by parasite P.berghei and by Gram-negative bacteria such as E.coli (PubMed:16188883). In response to P.berghei infection, contributes to the clearing of parasite ookinetes independent of melanization, an innate immune response which consists in the deposition of melanin pigments on invading pathogens and parasites (PubMed:16188883).</text>
</comment>
<comment type="subcellular location">
    <subcellularLocation>
        <location evidence="7">Secreted</location>
    </subcellularLocation>
    <text evidence="7">Secreted in the hemolymph.</text>
</comment>
<comment type="tissue specificity">
    <text evidence="7">Expressed by a subpopulation of hemocytes.</text>
</comment>
<comment type="developmental stage">
    <text evidence="7">Expressed in adult females and to a lesser extent in the second and third larval, and pupal stages.</text>
</comment>
<comment type="induction">
    <text evidence="7">Induced by infection with E.coli or S.aureus bacteria. Induced by infection with P.berghei parasite following ookinete invasion of the midgut cells.</text>
</comment>
<comment type="domain">
    <text evidence="6">The clip domain consists of 35-55 residues which are 'knitted' together usually by 3 conserved disulfide bonds forming a clip-like compact structure.</text>
</comment>
<comment type="PTM">
    <text evidence="7">N-glycosylated.</text>
</comment>
<comment type="PTM">
    <text evidence="10">Proteolytically cleaved.</text>
</comment>
<comment type="disruption phenotype">
    <text evidence="7">RNAi-mediated knockdown in the G3 strain reduces survival following infection by E.coli bacteria but not following infection by S.aureus bacteria. Following P.berghei infection, the number of parasite oocysts in the gut is increased in the susceptible G3 strain due to a failure to kill or/and lyse ookinetes (the motile parasite zygote that enters the gut to form an oocyst). RNAi-mediated knockdown in the refractory L3-5 strain results in an increase in the number of killed and melanized ookinetes following P.berghei infection. Simultaneous knockdown of lectin CTL4 in the G3 strain (but not in L3-5 strain) causes an increase in the number of developing oocysts and a decrease in melanized ookinetes.</text>
</comment>
<comment type="similarity">
    <text evidence="6">Belongs to the peptidase S1 family. CLIP subfamily.</text>
</comment>
<evidence type="ECO:0000250" key="1">
    <source>
        <dbReference type="UniProtKB" id="A0A126GUP6"/>
    </source>
</evidence>
<evidence type="ECO:0000250" key="2">
    <source>
        <dbReference type="UniProtKB" id="Q9GRW0"/>
    </source>
</evidence>
<evidence type="ECO:0000255" key="3"/>
<evidence type="ECO:0000255" key="4">
    <source>
        <dbReference type="PROSITE-ProRule" id="PRU00274"/>
    </source>
</evidence>
<evidence type="ECO:0000255" key="5">
    <source>
        <dbReference type="PROSITE-ProRule" id="PRU00498"/>
    </source>
</evidence>
<evidence type="ECO:0000255" key="6">
    <source>
        <dbReference type="PROSITE-ProRule" id="PRU01236"/>
    </source>
</evidence>
<evidence type="ECO:0000269" key="7">
    <source>
    </source>
</evidence>
<evidence type="ECO:0000303" key="8">
    <source>
    </source>
</evidence>
<evidence type="ECO:0000305" key="9"/>
<evidence type="ECO:0000305" key="10">
    <source>
    </source>
</evidence>
<evidence type="ECO:0000312" key="11">
    <source>
        <dbReference type="EMBL" id="CAB90818.1"/>
    </source>
</evidence>
<evidence type="ECO:0000312" key="12">
    <source>
        <dbReference type="EMBL" id="EAA14160.5"/>
    </source>
</evidence>
<evidence type="ECO:0000312" key="13">
    <source>
        <dbReference type="Proteomes" id="UP000007062"/>
    </source>
</evidence>
<sequence>MRWLVCLIVSWCSLVPLGATVGQSLNSGDPCQTPSGTAGTCEPVKNCSYVRKILKSPDFSHYDTTYLDTLKCGDLMVPMRKKPIPLLCCPKFSNSPTCGAQQLADRIYFGEETERGAHPWAALLFYNVGRNRTVPKCGGALISERYVITAAHCTVDKPNWKLLYVRFNEFNTSSADNCTTENDEVICREDYAVESIVPHPEYDMHNISRPNDICILRLASDVTFNDYVRPICLPFDPDVQQLPIVDEIFTVTGWGETEDRRPSDTQKHVELPGLEHEACNSVYAVANVTLSDKQLCIGGLNGSDSCRGDSGGPLMREVRGGWFLIGVVSFGARFCGTQNLPGVYTNVAKYLDWMETVMFVERYL</sequence>
<proteinExistence type="evidence at protein level"/>
<name>CLB15_ANOGA</name>
<keyword id="KW-1015">Disulfide bond</keyword>
<keyword id="KW-0325">Glycoprotein</keyword>
<keyword id="KW-0378">Hydrolase</keyword>
<keyword id="KW-0391">Immunity</keyword>
<keyword id="KW-0399">Innate immunity</keyword>
<keyword id="KW-0645">Protease</keyword>
<keyword id="KW-1185">Reference proteome</keyword>
<keyword id="KW-0964">Secreted</keyword>
<keyword id="KW-0720">Serine protease</keyword>
<keyword id="KW-0732">Signal</keyword>
<dbReference type="EC" id="3.4.21.-" evidence="4"/>
<dbReference type="EMBL" id="AJ276486">
    <property type="protein sequence ID" value="CAB90818.1"/>
    <property type="molecule type" value="mRNA"/>
</dbReference>
<dbReference type="EMBL" id="AAAB01008980">
    <property type="protein sequence ID" value="EAA14160.5"/>
    <property type="molecule type" value="Genomic_DNA"/>
</dbReference>
<dbReference type="RefSeq" id="XP_318957.5">
    <property type="nucleotide sequence ID" value="XM_318957.5"/>
</dbReference>
<dbReference type="SMR" id="Q9NAS9"/>
<dbReference type="STRING" id="7165.Q9NAS9"/>
<dbReference type="MEROPS" id="S01.449"/>
<dbReference type="GlyCosmos" id="Q9NAS9">
    <property type="glycosylation" value="7 sites, No reported glycans"/>
</dbReference>
<dbReference type="PaxDb" id="7165-AGAP009844-PA"/>
<dbReference type="EnsemblMetazoa" id="AGAP009844-RA">
    <property type="protein sequence ID" value="AGAP009844-PA"/>
    <property type="gene ID" value="AGAP009844"/>
</dbReference>
<dbReference type="GeneID" id="1279262"/>
<dbReference type="KEGG" id="aga:1279262"/>
<dbReference type="VEuPathDB" id="VectorBase:AGAMI1_000591"/>
<dbReference type="VEuPathDB" id="VectorBase:AGAP009844"/>
<dbReference type="eggNOG" id="KOG3627">
    <property type="taxonomic scope" value="Eukaryota"/>
</dbReference>
<dbReference type="HOGENOM" id="CLU_006842_0_3_1"/>
<dbReference type="InParanoid" id="Q9NAS9"/>
<dbReference type="OMA" id="ISERYVI"/>
<dbReference type="PhylomeDB" id="Q9NAS9"/>
<dbReference type="Proteomes" id="UP000007062">
    <property type="component" value="Chromosome 3R"/>
</dbReference>
<dbReference type="ExpressionAtlas" id="Q9NAS9">
    <property type="expression patterns" value="differential"/>
</dbReference>
<dbReference type="GO" id="GO:0005615">
    <property type="term" value="C:extracellular space"/>
    <property type="evidence" value="ECO:0000314"/>
    <property type="project" value="UniProtKB"/>
</dbReference>
<dbReference type="GO" id="GO:0004252">
    <property type="term" value="F:serine-type endopeptidase activity"/>
    <property type="evidence" value="ECO:0000318"/>
    <property type="project" value="GO_Central"/>
</dbReference>
<dbReference type="GO" id="GO:0050829">
    <property type="term" value="P:defense response to Gram-negative bacterium"/>
    <property type="evidence" value="ECO:0000315"/>
    <property type="project" value="UniProtKB"/>
</dbReference>
<dbReference type="GO" id="GO:0042832">
    <property type="term" value="P:defense response to protozoan"/>
    <property type="evidence" value="ECO:0000315"/>
    <property type="project" value="UniProtKB"/>
</dbReference>
<dbReference type="GO" id="GO:0045087">
    <property type="term" value="P:innate immune response"/>
    <property type="evidence" value="ECO:0007669"/>
    <property type="project" value="UniProtKB-KW"/>
</dbReference>
<dbReference type="GO" id="GO:0006508">
    <property type="term" value="P:proteolysis"/>
    <property type="evidence" value="ECO:0000318"/>
    <property type="project" value="GO_Central"/>
</dbReference>
<dbReference type="CDD" id="cd00190">
    <property type="entry name" value="Tryp_SPc"/>
    <property type="match status" value="1"/>
</dbReference>
<dbReference type="FunFam" id="2.40.10.10:FF:000028">
    <property type="entry name" value="Serine protease easter"/>
    <property type="match status" value="1"/>
</dbReference>
<dbReference type="FunFam" id="2.40.10.10:FF:000084">
    <property type="entry name" value="Serine protease easter"/>
    <property type="match status" value="1"/>
</dbReference>
<dbReference type="Gene3D" id="3.30.1640.30">
    <property type="match status" value="1"/>
</dbReference>
<dbReference type="Gene3D" id="2.40.10.10">
    <property type="entry name" value="Trypsin-like serine proteases"/>
    <property type="match status" value="2"/>
</dbReference>
<dbReference type="InterPro" id="IPR022700">
    <property type="entry name" value="CLIP"/>
</dbReference>
<dbReference type="InterPro" id="IPR038565">
    <property type="entry name" value="CLIP_sf"/>
</dbReference>
<dbReference type="InterPro" id="IPR009003">
    <property type="entry name" value="Peptidase_S1_PA"/>
</dbReference>
<dbReference type="InterPro" id="IPR043504">
    <property type="entry name" value="Peptidase_S1_PA_chymotrypsin"/>
</dbReference>
<dbReference type="InterPro" id="IPR001314">
    <property type="entry name" value="Peptidase_S1A"/>
</dbReference>
<dbReference type="InterPro" id="IPR051487">
    <property type="entry name" value="Ser/Thr_Proteases_Immune/Dev"/>
</dbReference>
<dbReference type="InterPro" id="IPR001254">
    <property type="entry name" value="Trypsin_dom"/>
</dbReference>
<dbReference type="InterPro" id="IPR018114">
    <property type="entry name" value="TRYPSIN_HIS"/>
</dbReference>
<dbReference type="InterPro" id="IPR033116">
    <property type="entry name" value="TRYPSIN_SER"/>
</dbReference>
<dbReference type="PANTHER" id="PTHR24256">
    <property type="entry name" value="TRYPTASE-RELATED"/>
    <property type="match status" value="1"/>
</dbReference>
<dbReference type="Pfam" id="PF12032">
    <property type="entry name" value="CLIP"/>
    <property type="match status" value="1"/>
</dbReference>
<dbReference type="Pfam" id="PF00089">
    <property type="entry name" value="Trypsin"/>
    <property type="match status" value="1"/>
</dbReference>
<dbReference type="PRINTS" id="PR00722">
    <property type="entry name" value="CHYMOTRYPSIN"/>
</dbReference>
<dbReference type="SMART" id="SM00680">
    <property type="entry name" value="CLIP"/>
    <property type="match status" value="1"/>
</dbReference>
<dbReference type="SMART" id="SM00020">
    <property type="entry name" value="Tryp_SPc"/>
    <property type="match status" value="1"/>
</dbReference>
<dbReference type="SUPFAM" id="SSF50494">
    <property type="entry name" value="Trypsin-like serine proteases"/>
    <property type="match status" value="1"/>
</dbReference>
<dbReference type="PROSITE" id="PS51888">
    <property type="entry name" value="CLIP"/>
    <property type="match status" value="1"/>
</dbReference>
<dbReference type="PROSITE" id="PS50240">
    <property type="entry name" value="TRYPSIN_DOM"/>
    <property type="match status" value="1"/>
</dbReference>
<dbReference type="PROSITE" id="PS00134">
    <property type="entry name" value="TRYPSIN_HIS"/>
    <property type="match status" value="1"/>
</dbReference>
<dbReference type="PROSITE" id="PS00135">
    <property type="entry name" value="TRYPSIN_SER"/>
    <property type="match status" value="1"/>
</dbReference>
<organism evidence="11">
    <name type="scientific">Anopheles gambiae</name>
    <name type="common">African malaria mosquito</name>
    <dbReference type="NCBI Taxonomy" id="7165"/>
    <lineage>
        <taxon>Eukaryota</taxon>
        <taxon>Metazoa</taxon>
        <taxon>Ecdysozoa</taxon>
        <taxon>Arthropoda</taxon>
        <taxon>Hexapoda</taxon>
        <taxon>Insecta</taxon>
        <taxon>Pterygota</taxon>
        <taxon>Neoptera</taxon>
        <taxon>Endopterygota</taxon>
        <taxon>Diptera</taxon>
        <taxon>Nematocera</taxon>
        <taxon>Culicoidea</taxon>
        <taxon>Culicidae</taxon>
        <taxon>Anophelinae</taxon>
        <taxon>Anopheles</taxon>
    </lineage>
</organism>
<protein>
    <recommendedName>
        <fullName evidence="9">CLIP domain-containing serine protease B15</fullName>
        <ecNumber evidence="4">3.4.21.-</ecNumber>
    </recommendedName>
    <component>
        <recommendedName>
            <fullName evidence="9">CLIP domain-containing serine protease B15 light chain</fullName>
        </recommendedName>
    </component>
    <component>
        <recommendedName>
            <fullName evidence="9">CLIP domain-containing serine protease B15 heavy chain</fullName>
        </recommendedName>
    </component>
</protein>
<feature type="signal peptide" evidence="3">
    <location>
        <begin position="1"/>
        <end position="19"/>
    </location>
</feature>
<feature type="chain" id="PRO_5013536761" description="CLIP domain-containing serine protease B15" evidence="3">
    <location>
        <begin position="20"/>
        <end position="364"/>
    </location>
</feature>
<feature type="chain" id="PRO_0000455752" description="CLIP domain-containing serine protease B15 light chain" evidence="2">
    <location>
        <begin position="20"/>
        <end position="106"/>
    </location>
</feature>
<feature type="chain" id="PRO_0000455753" description="CLIP domain-containing serine protease B15 heavy chain" evidence="2">
    <location>
        <begin position="107"/>
        <end position="364"/>
    </location>
</feature>
<feature type="domain" description="Clip" evidence="6">
    <location>
        <begin position="30"/>
        <end position="89"/>
    </location>
</feature>
<feature type="domain" description="Peptidase S1" evidence="4">
    <location>
        <begin position="107"/>
        <end position="359"/>
    </location>
</feature>
<feature type="active site" description="Charge relay system" evidence="4">
    <location>
        <position position="152"/>
    </location>
</feature>
<feature type="active site" description="Charge relay system" evidence="4">
    <location>
        <position position="212"/>
    </location>
</feature>
<feature type="active site" description="Charge relay system" evidence="4">
    <location>
        <position position="310"/>
    </location>
</feature>
<feature type="site" description="Cleavage" evidence="2">
    <location>
        <begin position="106"/>
        <end position="107"/>
    </location>
</feature>
<feature type="glycosylation site" description="N-linked (GlcNAc...) asparagine" evidence="5">
    <location>
        <position position="46"/>
    </location>
</feature>
<feature type="glycosylation site" description="N-linked (GlcNAc...) asparagine" evidence="5">
    <location>
        <position position="131"/>
    </location>
</feature>
<feature type="glycosylation site" description="N-linked (GlcNAc...) asparagine" evidence="5">
    <location>
        <position position="171"/>
    </location>
</feature>
<feature type="glycosylation site" description="N-linked (GlcNAc...) asparagine" evidence="5">
    <location>
        <position position="177"/>
    </location>
</feature>
<feature type="glycosylation site" description="N-linked (GlcNAc...) asparagine" evidence="5">
    <location>
        <position position="206"/>
    </location>
</feature>
<feature type="glycosylation site" description="N-linked (GlcNAc...) asparagine" evidence="5">
    <location>
        <position position="287"/>
    </location>
</feature>
<feature type="glycosylation site" description="N-linked (GlcNAc...) asparagine" evidence="5">
    <location>
        <position position="301"/>
    </location>
</feature>
<feature type="disulfide bond" evidence="6">
    <location>
        <begin position="31"/>
        <end position="88"/>
    </location>
</feature>
<feature type="disulfide bond" evidence="6">
    <location>
        <begin position="41"/>
        <end position="72"/>
    </location>
</feature>
<feature type="disulfide bond" evidence="6">
    <location>
        <begin position="47"/>
        <end position="89"/>
    </location>
</feature>
<feature type="disulfide bond" evidence="4">
    <location>
        <begin position="137"/>
        <end position="153"/>
    </location>
</feature>
<feature type="disulfide bond" evidence="4">
    <location>
        <begin position="279"/>
        <end position="296"/>
    </location>
</feature>
<feature type="disulfide bond" evidence="4">
    <location>
        <begin position="306"/>
        <end position="335"/>
    </location>
</feature>